<protein>
    <recommendedName>
        <fullName evidence="2">NAD kinase 1</fullName>
        <ecNumber evidence="2">2.7.1.23</ecNumber>
    </recommendedName>
    <alternativeName>
        <fullName evidence="2">ATP-dependent NAD kinase</fullName>
    </alternativeName>
    <alternativeName>
        <fullName>Poly(P)-dependent NAD kinase</fullName>
        <shortName>PPNK</shortName>
    </alternativeName>
</protein>
<comment type="function">
    <text evidence="2 3">Involved in the regulation of the intracellular balance of NAD and NADP, and is a key enzyme in the biosynthesis of NADP. Catalyzes specifically the phosphorylation on 2'-hydroxyl of the adenosine moiety of NAD to yield NADP. It can use ATP and other nucleoside triphosphates (GTP, UTP) as well as inorganic polyphosphate (poly(P)) as a source of phosphorus.</text>
</comment>
<comment type="catalytic activity">
    <reaction evidence="2 3">
        <text>NAD(+) + ATP = ADP + NADP(+) + H(+)</text>
        <dbReference type="Rhea" id="RHEA:18629"/>
        <dbReference type="ChEBI" id="CHEBI:15378"/>
        <dbReference type="ChEBI" id="CHEBI:30616"/>
        <dbReference type="ChEBI" id="CHEBI:57540"/>
        <dbReference type="ChEBI" id="CHEBI:58349"/>
        <dbReference type="ChEBI" id="CHEBI:456216"/>
        <dbReference type="EC" id="2.7.1.23"/>
    </reaction>
</comment>
<comment type="cofactor">
    <cofactor evidence="2 3">
        <name>Ca(2+)</name>
        <dbReference type="ChEBI" id="CHEBI:29108"/>
    </cofactor>
    <cofactor evidence="2 3">
        <name>Mn(2+)</name>
        <dbReference type="ChEBI" id="CHEBI:29035"/>
    </cofactor>
    <text evidence="2 3">Divalent metal ions. Both Ca(2+) and Mn(2+) ions are more effective activators than zinc, cobalt, copper and magnesium ions at low concentrations.</text>
</comment>
<comment type="activity regulation">
    <text evidence="3">Allosterically inhibited by NADP and activated by quinolinic acid. Strongly inhibited by HgCl(2).</text>
</comment>
<comment type="biophysicochemical properties">
    <kinetics>
        <KM evidence="3">0.73 mM for NAD (at pH 7.8 and 25 degrees Celsius)</KM>
        <Vmax evidence="3">3.82 umol/min/mg enzyme (at pH 7.8 and 25 degrees Celsius)</Vmax>
        <text>kcat is 8 sec(-1) for kinase activity with NAD (at pH 7.8 and 25 degrees Celsius).</text>
    </kinetics>
    <phDependence>
        <text evidence="3">Optimum pH is 9.</text>
    </phDependence>
    <temperatureDependence>
        <text evidence="3">Optimum temperature is 35 degrees Celsius. Half of the activity is lost after treatment at 40 degrees Celsius for 15 minutes.</text>
    </temperatureDependence>
</comment>
<comment type="subunit">
    <text evidence="3">Homodimer.</text>
</comment>
<comment type="subcellular location">
    <subcellularLocation>
        <location evidence="2">Cytoplasm</location>
    </subcellularLocation>
</comment>
<comment type="similarity">
    <text evidence="2">Belongs to the NAD kinase family.</text>
</comment>
<feature type="chain" id="PRO_0000120598" description="NAD kinase 1">
    <location>
        <begin position="1"/>
        <end position="266"/>
    </location>
</feature>
<feature type="active site" description="Proton acceptor" evidence="2">
    <location>
        <position position="45"/>
    </location>
</feature>
<feature type="binding site" evidence="2">
    <location>
        <begin position="45"/>
        <end position="46"/>
    </location>
    <ligand>
        <name>NAD(+)</name>
        <dbReference type="ChEBI" id="CHEBI:57540"/>
    </ligand>
</feature>
<feature type="binding site" evidence="2">
    <location>
        <begin position="122"/>
        <end position="123"/>
    </location>
    <ligand>
        <name>NAD(+)</name>
        <dbReference type="ChEBI" id="CHEBI:57540"/>
    </ligand>
</feature>
<feature type="binding site" evidence="2">
    <location>
        <position position="148"/>
    </location>
    <ligand>
        <name>NAD(+)</name>
        <dbReference type="ChEBI" id="CHEBI:57540"/>
    </ligand>
</feature>
<feature type="binding site" evidence="1">
    <location>
        <position position="150"/>
    </location>
    <ligand>
        <name>ATP</name>
        <dbReference type="ChEBI" id="CHEBI:30616"/>
    </ligand>
</feature>
<feature type="binding site" evidence="2">
    <location>
        <position position="158"/>
    </location>
    <ligand>
        <name>NAD(+)</name>
        <dbReference type="ChEBI" id="CHEBI:57540"/>
    </ligand>
</feature>
<feature type="binding site" evidence="2">
    <location>
        <begin position="161"/>
        <end position="166"/>
    </location>
    <ligand>
        <name>NAD(+)</name>
        <dbReference type="ChEBI" id="CHEBI:57540"/>
    </ligand>
</feature>
<keyword id="KW-0067">ATP-binding</keyword>
<keyword id="KW-0963">Cytoplasm</keyword>
<keyword id="KW-0903">Direct protein sequencing</keyword>
<keyword id="KW-0418">Kinase</keyword>
<keyword id="KW-0520">NAD</keyword>
<keyword id="KW-0521">NADP</keyword>
<keyword id="KW-0547">Nucleotide-binding</keyword>
<keyword id="KW-1185">Reference proteome</keyword>
<keyword id="KW-0808">Transferase</keyword>
<dbReference type="EC" id="2.7.1.23" evidence="2"/>
<dbReference type="EMBL" id="AL009126">
    <property type="protein sequence ID" value="CAB13018.1"/>
    <property type="molecule type" value="Genomic_DNA"/>
</dbReference>
<dbReference type="PIR" id="F69844">
    <property type="entry name" value="F69844"/>
</dbReference>
<dbReference type="RefSeq" id="NP_389043.1">
    <property type="nucleotide sequence ID" value="NC_000964.3"/>
</dbReference>
<dbReference type="RefSeq" id="WP_003232918.1">
    <property type="nucleotide sequence ID" value="NZ_OZ025638.1"/>
</dbReference>
<dbReference type="SMR" id="O31612"/>
<dbReference type="FunCoup" id="O31612">
    <property type="interactions" value="549"/>
</dbReference>
<dbReference type="STRING" id="224308.BSU11610"/>
<dbReference type="PaxDb" id="224308-BSU11610"/>
<dbReference type="EnsemblBacteria" id="CAB13018">
    <property type="protein sequence ID" value="CAB13018"/>
    <property type="gene ID" value="BSU_11610"/>
</dbReference>
<dbReference type="GeneID" id="936414"/>
<dbReference type="KEGG" id="bsu:BSU11610"/>
<dbReference type="PATRIC" id="fig|224308.179.peg.1250"/>
<dbReference type="eggNOG" id="COG0061">
    <property type="taxonomic scope" value="Bacteria"/>
</dbReference>
<dbReference type="InParanoid" id="O31612"/>
<dbReference type="OrthoDB" id="9774737at2"/>
<dbReference type="PhylomeDB" id="O31612"/>
<dbReference type="BioCyc" id="BSUB:BSU11610-MONOMER"/>
<dbReference type="BRENDA" id="2.7.1.23">
    <property type="organism ID" value="658"/>
</dbReference>
<dbReference type="SABIO-RK" id="O31612"/>
<dbReference type="Proteomes" id="UP000001570">
    <property type="component" value="Chromosome"/>
</dbReference>
<dbReference type="GO" id="GO:0005737">
    <property type="term" value="C:cytoplasm"/>
    <property type="evidence" value="ECO:0007669"/>
    <property type="project" value="UniProtKB-SubCell"/>
</dbReference>
<dbReference type="GO" id="GO:0005524">
    <property type="term" value="F:ATP binding"/>
    <property type="evidence" value="ECO:0000314"/>
    <property type="project" value="UniProtKB"/>
</dbReference>
<dbReference type="GO" id="GO:0046872">
    <property type="term" value="F:metal ion binding"/>
    <property type="evidence" value="ECO:0007669"/>
    <property type="project" value="UniProtKB-UniRule"/>
</dbReference>
<dbReference type="GO" id="GO:0051287">
    <property type="term" value="F:NAD binding"/>
    <property type="evidence" value="ECO:0000314"/>
    <property type="project" value="UniProtKB"/>
</dbReference>
<dbReference type="GO" id="GO:0003951">
    <property type="term" value="F:NAD+ kinase activity"/>
    <property type="evidence" value="ECO:0000314"/>
    <property type="project" value="UniProtKB"/>
</dbReference>
<dbReference type="GO" id="GO:0019674">
    <property type="term" value="P:NAD metabolic process"/>
    <property type="evidence" value="ECO:0007669"/>
    <property type="project" value="InterPro"/>
</dbReference>
<dbReference type="GO" id="GO:0006741">
    <property type="term" value="P:NADP biosynthetic process"/>
    <property type="evidence" value="ECO:0000314"/>
    <property type="project" value="UniProtKB"/>
</dbReference>
<dbReference type="FunFam" id="2.60.200.30:FF:000002">
    <property type="entry name" value="NAD kinase"/>
    <property type="match status" value="1"/>
</dbReference>
<dbReference type="Gene3D" id="3.40.50.10330">
    <property type="entry name" value="Probable inorganic polyphosphate/atp-NAD kinase, domain 1"/>
    <property type="match status" value="1"/>
</dbReference>
<dbReference type="Gene3D" id="2.60.200.30">
    <property type="entry name" value="Probable inorganic polyphosphate/atp-NAD kinase, domain 2"/>
    <property type="match status" value="1"/>
</dbReference>
<dbReference type="HAMAP" id="MF_00361">
    <property type="entry name" value="NAD_kinase"/>
    <property type="match status" value="1"/>
</dbReference>
<dbReference type="InterPro" id="IPR017438">
    <property type="entry name" value="ATP-NAD_kinase_N"/>
</dbReference>
<dbReference type="InterPro" id="IPR017437">
    <property type="entry name" value="ATP-NAD_kinase_PpnK-typ_C"/>
</dbReference>
<dbReference type="InterPro" id="IPR016064">
    <property type="entry name" value="NAD/diacylglycerol_kinase_sf"/>
</dbReference>
<dbReference type="InterPro" id="IPR002504">
    <property type="entry name" value="NADK"/>
</dbReference>
<dbReference type="NCBIfam" id="NF003424">
    <property type="entry name" value="PRK04885.1"/>
    <property type="match status" value="1"/>
</dbReference>
<dbReference type="PANTHER" id="PTHR20275">
    <property type="entry name" value="NAD KINASE"/>
    <property type="match status" value="1"/>
</dbReference>
<dbReference type="PANTHER" id="PTHR20275:SF0">
    <property type="entry name" value="NAD KINASE"/>
    <property type="match status" value="1"/>
</dbReference>
<dbReference type="Pfam" id="PF01513">
    <property type="entry name" value="NAD_kinase"/>
    <property type="match status" value="1"/>
</dbReference>
<dbReference type="Pfam" id="PF20143">
    <property type="entry name" value="NAD_kinase_C"/>
    <property type="match status" value="1"/>
</dbReference>
<dbReference type="SUPFAM" id="SSF111331">
    <property type="entry name" value="NAD kinase/diacylglycerol kinase-like"/>
    <property type="match status" value="1"/>
</dbReference>
<reference key="1">
    <citation type="journal article" date="1997" name="Nature">
        <title>The complete genome sequence of the Gram-positive bacterium Bacillus subtilis.</title>
        <authorList>
            <person name="Kunst F."/>
            <person name="Ogasawara N."/>
            <person name="Moszer I."/>
            <person name="Albertini A.M."/>
            <person name="Alloni G."/>
            <person name="Azevedo V."/>
            <person name="Bertero M.G."/>
            <person name="Bessieres P."/>
            <person name="Bolotin A."/>
            <person name="Borchert S."/>
            <person name="Borriss R."/>
            <person name="Boursier L."/>
            <person name="Brans A."/>
            <person name="Braun M."/>
            <person name="Brignell S.C."/>
            <person name="Bron S."/>
            <person name="Brouillet S."/>
            <person name="Bruschi C.V."/>
            <person name="Caldwell B."/>
            <person name="Capuano V."/>
            <person name="Carter N.M."/>
            <person name="Choi S.-K."/>
            <person name="Codani J.-J."/>
            <person name="Connerton I.F."/>
            <person name="Cummings N.J."/>
            <person name="Daniel R.A."/>
            <person name="Denizot F."/>
            <person name="Devine K.M."/>
            <person name="Duesterhoeft A."/>
            <person name="Ehrlich S.D."/>
            <person name="Emmerson P.T."/>
            <person name="Entian K.-D."/>
            <person name="Errington J."/>
            <person name="Fabret C."/>
            <person name="Ferrari E."/>
            <person name="Foulger D."/>
            <person name="Fritz C."/>
            <person name="Fujita M."/>
            <person name="Fujita Y."/>
            <person name="Fuma S."/>
            <person name="Galizzi A."/>
            <person name="Galleron N."/>
            <person name="Ghim S.-Y."/>
            <person name="Glaser P."/>
            <person name="Goffeau A."/>
            <person name="Golightly E.J."/>
            <person name="Grandi G."/>
            <person name="Guiseppi G."/>
            <person name="Guy B.J."/>
            <person name="Haga K."/>
            <person name="Haiech J."/>
            <person name="Harwood C.R."/>
            <person name="Henaut A."/>
            <person name="Hilbert H."/>
            <person name="Holsappel S."/>
            <person name="Hosono S."/>
            <person name="Hullo M.-F."/>
            <person name="Itaya M."/>
            <person name="Jones L.-M."/>
            <person name="Joris B."/>
            <person name="Karamata D."/>
            <person name="Kasahara Y."/>
            <person name="Klaerr-Blanchard M."/>
            <person name="Klein C."/>
            <person name="Kobayashi Y."/>
            <person name="Koetter P."/>
            <person name="Koningstein G."/>
            <person name="Krogh S."/>
            <person name="Kumano M."/>
            <person name="Kurita K."/>
            <person name="Lapidus A."/>
            <person name="Lardinois S."/>
            <person name="Lauber J."/>
            <person name="Lazarevic V."/>
            <person name="Lee S.-M."/>
            <person name="Levine A."/>
            <person name="Liu H."/>
            <person name="Masuda S."/>
            <person name="Mauel C."/>
            <person name="Medigue C."/>
            <person name="Medina N."/>
            <person name="Mellado R.P."/>
            <person name="Mizuno M."/>
            <person name="Moestl D."/>
            <person name="Nakai S."/>
            <person name="Noback M."/>
            <person name="Noone D."/>
            <person name="O'Reilly M."/>
            <person name="Ogawa K."/>
            <person name="Ogiwara A."/>
            <person name="Oudega B."/>
            <person name="Park S.-H."/>
            <person name="Parro V."/>
            <person name="Pohl T.M."/>
            <person name="Portetelle D."/>
            <person name="Porwollik S."/>
            <person name="Prescott A.M."/>
            <person name="Presecan E."/>
            <person name="Pujic P."/>
            <person name="Purnelle B."/>
            <person name="Rapoport G."/>
            <person name="Rey M."/>
            <person name="Reynolds S."/>
            <person name="Rieger M."/>
            <person name="Rivolta C."/>
            <person name="Rocha E."/>
            <person name="Roche B."/>
            <person name="Rose M."/>
            <person name="Sadaie Y."/>
            <person name="Sato T."/>
            <person name="Scanlan E."/>
            <person name="Schleich S."/>
            <person name="Schroeter R."/>
            <person name="Scoffone F."/>
            <person name="Sekiguchi J."/>
            <person name="Sekowska A."/>
            <person name="Seror S.J."/>
            <person name="Serror P."/>
            <person name="Shin B.-S."/>
            <person name="Soldo B."/>
            <person name="Sorokin A."/>
            <person name="Tacconi E."/>
            <person name="Takagi T."/>
            <person name="Takahashi H."/>
            <person name="Takemaru K."/>
            <person name="Takeuchi M."/>
            <person name="Tamakoshi A."/>
            <person name="Tanaka T."/>
            <person name="Terpstra P."/>
            <person name="Tognoni A."/>
            <person name="Tosato V."/>
            <person name="Uchiyama S."/>
            <person name="Vandenbol M."/>
            <person name="Vannier F."/>
            <person name="Vassarotti A."/>
            <person name="Viari A."/>
            <person name="Wambutt R."/>
            <person name="Wedler E."/>
            <person name="Wedler H."/>
            <person name="Weitzenegger T."/>
            <person name="Winters P."/>
            <person name="Wipat A."/>
            <person name="Yamamoto H."/>
            <person name="Yamane K."/>
            <person name="Yasumoto K."/>
            <person name="Yata K."/>
            <person name="Yoshida K."/>
            <person name="Yoshikawa H.-F."/>
            <person name="Zumstein E."/>
            <person name="Yoshikawa H."/>
            <person name="Danchin A."/>
        </authorList>
    </citation>
    <scope>NUCLEOTIDE SEQUENCE [LARGE SCALE GENOMIC DNA]</scope>
    <source>
        <strain>168</strain>
    </source>
</reference>
<reference key="2">
    <citation type="journal article" date="2003" name="J. Bacteriol.">
        <title>Allosteric regulation of Bacillus subtilis NAD kinase by quinolinic acid.</title>
        <authorList>
            <person name="Garavaglia S."/>
            <person name="Galizzi A."/>
            <person name="Rizzi M."/>
        </authorList>
    </citation>
    <scope>PROTEIN SEQUENCE OF N-TERMINUS</scope>
    <scope>FUNCTION</scope>
    <scope>CATALYTIC ACTIVITY</scope>
    <scope>BIOPHYSICOCHEMICAL PROPERTIES</scope>
    <scope>ACTIVITY REGULATION</scope>
    <scope>SUBSTRATE SPECIFICITY</scope>
    <scope>COFACTOR</scope>
    <scope>SUBUNIT</scope>
    <scope>NOMENCLATURE</scope>
    <source>
        <strain>168</strain>
    </source>
</reference>
<organism>
    <name type="scientific">Bacillus subtilis (strain 168)</name>
    <dbReference type="NCBI Taxonomy" id="224308"/>
    <lineage>
        <taxon>Bacteria</taxon>
        <taxon>Bacillati</taxon>
        <taxon>Bacillota</taxon>
        <taxon>Bacilli</taxon>
        <taxon>Bacillales</taxon>
        <taxon>Bacillaceae</taxon>
        <taxon>Bacillus</taxon>
    </lineage>
</organism>
<accession>O31612</accession>
<sequence length="266" mass="30012">MKFAVSSKGDQVSDTLKSKIQAYLLDFDMELDENEPEIVISVGGDGTLLYAFHRYSDRLDKTAFVGVHTGHLGFYADWVPHEIEKLVLAIAKTPYHTVEYPLLEVIVTYHENEREERYLALNECTIKSIEGSLVADVEIKGQLFETFRGDGLCLSTPSGSTAYNKALGGAIIHPSIRAIQLAEMASINNRVFRTVGSPLLLPSHHDCMIKPRNEVDFQVTIDHLTLLHKDVKSIRCQVASEKVRFARFRPFPFWKRVQDSFIGKGE</sequence>
<name>NADK1_BACSU</name>
<proteinExistence type="evidence at protein level"/>
<evidence type="ECO:0000250" key="1"/>
<evidence type="ECO:0000255" key="2">
    <source>
        <dbReference type="HAMAP-Rule" id="MF_00361"/>
    </source>
</evidence>
<evidence type="ECO:0000269" key="3">
    <source>
    </source>
</evidence>
<gene>
    <name type="primary">ppnKA</name>
    <name type="synonym">nadF</name>
    <name type="synonym">yjbN</name>
    <name type="ordered locus">BSU11610</name>
</gene>